<proteinExistence type="evidence at protein level"/>
<feature type="initiator methionine" description="Removed" evidence="2">
    <location>
        <position position="1"/>
    </location>
</feature>
<feature type="chain" id="PRO_0000129169" description="MICOS complex subunit MIC25">
    <location>
        <begin position="2"/>
        <end position="235"/>
    </location>
</feature>
<feature type="domain" description="CHCH" evidence="3">
    <location>
        <begin position="194"/>
        <end position="235"/>
    </location>
</feature>
<feature type="region of interest" description="Disordered" evidence="4">
    <location>
        <begin position="31"/>
        <end position="90"/>
    </location>
</feature>
<feature type="region of interest" description="Disordered" evidence="4">
    <location>
        <begin position="106"/>
        <end position="132"/>
    </location>
</feature>
<feature type="coiled-coil region" evidence="2">
    <location>
        <begin position="129"/>
        <end position="176"/>
    </location>
</feature>
<feature type="short sequence motif" description="Cx9C motif 1" evidence="3">
    <location>
        <begin position="197"/>
        <end position="207"/>
    </location>
</feature>
<feature type="short sequence motif" description="Cx9C motif 2" evidence="3">
    <location>
        <begin position="218"/>
        <end position="228"/>
    </location>
</feature>
<feature type="modified residue" description="Phosphoserine" evidence="12">
    <location>
        <position position="13"/>
    </location>
</feature>
<feature type="modified residue" description="Phosphoserine" evidence="1">
    <location>
        <position position="31"/>
    </location>
</feature>
<feature type="lipid moiety-binding region" description="N-myristoyl glycine" evidence="2">
    <location>
        <position position="2"/>
    </location>
</feature>
<feature type="disulfide bond" evidence="3">
    <location>
        <begin position="197"/>
        <end position="228"/>
    </location>
</feature>
<feature type="disulfide bond" evidence="3">
    <location>
        <begin position="207"/>
        <end position="218"/>
    </location>
</feature>
<feature type="sequence variant" id="VAR_024412" description="In dbSNP:rs2272487.">
    <original>A</original>
    <variation>S</variation>
    <location>
        <position position="95"/>
    </location>
</feature>
<gene>
    <name type="primary">CHCHD6</name>
    <name type="synonym">CHCM1</name>
    <name type="synonym">MIC25</name>
</gene>
<protein>
    <recommendedName>
        <fullName>MICOS complex subunit MIC25</fullName>
    </recommendedName>
    <alternativeName>
        <fullName>Coiled-coil-helix cristae morphology protein 1</fullName>
    </alternativeName>
    <alternativeName>
        <fullName>Coiled-coil-helix-coiled-coil-helix domain-containing protein 6</fullName>
    </alternativeName>
</protein>
<accession>Q9BRQ6</accession>
<accession>D6R9U0</accession>
<accession>D6RIB4</accession>
<accession>H8Y0Y7</accession>
<keyword id="KW-0175">Coiled coil</keyword>
<keyword id="KW-1015">Disulfide bond</keyword>
<keyword id="KW-0945">Host-virus interaction</keyword>
<keyword id="KW-0449">Lipoprotein</keyword>
<keyword id="KW-0472">Membrane</keyword>
<keyword id="KW-0496">Mitochondrion</keyword>
<keyword id="KW-0999">Mitochondrion inner membrane</keyword>
<keyword id="KW-0519">Myristate</keyword>
<keyword id="KW-0597">Phosphoprotein</keyword>
<keyword id="KW-1267">Proteomics identification</keyword>
<keyword id="KW-1185">Reference proteome</keyword>
<name>MIC25_HUMAN</name>
<organism>
    <name type="scientific">Homo sapiens</name>
    <name type="common">Human</name>
    <dbReference type="NCBI Taxonomy" id="9606"/>
    <lineage>
        <taxon>Eukaryota</taxon>
        <taxon>Metazoa</taxon>
        <taxon>Chordata</taxon>
        <taxon>Craniata</taxon>
        <taxon>Vertebrata</taxon>
        <taxon>Euteleostomi</taxon>
        <taxon>Mammalia</taxon>
        <taxon>Eutheria</taxon>
        <taxon>Euarchontoglires</taxon>
        <taxon>Primates</taxon>
        <taxon>Haplorrhini</taxon>
        <taxon>Catarrhini</taxon>
        <taxon>Hominidae</taxon>
        <taxon>Homo</taxon>
    </lineage>
</organism>
<comment type="function">
    <text evidence="6">Component of the MICOS complex, a large protein complex of the mitochondrial inner membrane that plays crucial roles in the maintenance of crista junctions, inner membrane architecture, and formation of contact sites to the outer membrane.</text>
</comment>
<comment type="subunit">
    <text evidence="5 6 7 8 10">Component of the mitochondrial contact site and cristae organizing system (MICOS) complex, composed of at least MICOS10/MIC10, CHCHD3/MIC19, CHCHD6/MIC25, APOOL/MIC27, IMMT/MIC60, APOO/MIC23/MIC26 and MICOS13/MIC13. This complex was also known under the names MINOS or MitOS complex. The MICOS complex associates with mitochondrial outer membrane proteins SAMM50, MTX1 and MTX2 (together described as components of the mitochondrial outer membrane sorting assembly machinery (SAM) complex) and DNAJC11, mitochondrial inner membrane protein TMEM11 and with HSPA9 (PubMed:17624330, PubMed:22228767, PubMed:25781180, PubMed:25997101). The MICOS and SAM complexes together with DNAJC11 are part of a large protein complex spanning both membranes termed the mitochondrial intermembrane space bridging (MIB) complex. Interacts with DISC1 (PubMed:22228767). Interacts with DISC1 (PubMed:22228767). Interacts with IMMT/MIC60 (PubMed:22228767, PubMed:25997101).</text>
</comment>
<comment type="subunit">
    <text evidence="9">(Microbial infection) Interacts with human cytomegalovirus protein UL37 isoform vMIA; this interaction rewires mitochondria by engaging the conserved MICOS complex.</text>
</comment>
<comment type="interaction">
    <interactant intactId="EBI-2557895">
        <id>Q9BRQ6</id>
    </interactant>
    <interactant intactId="EBI-743375">
        <id>Q9NX63</id>
        <label>CHCHD3</label>
    </interactant>
    <organismsDiffer>false</organismsDiffer>
    <experiments>2</experiments>
</comment>
<comment type="interaction">
    <interactant intactId="EBI-2557895">
        <id>Q9BRQ6</id>
    </interactant>
    <interactant intactId="EBI-748409">
        <id>Q9Y512</id>
        <label>SAMM50</label>
    </interactant>
    <organismsDiffer>false</organismsDiffer>
    <experiments>3</experiments>
</comment>
<comment type="subcellular location">
    <subcellularLocation>
        <location evidence="11">Mitochondrion inner membrane</location>
        <topology evidence="11">Lipid-anchor</topology>
    </subcellularLocation>
    <subcellularLocation>
        <location evidence="7 8">Mitochondrion</location>
    </subcellularLocation>
</comment>
<comment type="induction">
    <text evidence="6">Down-regulated following genotoxic stress.</text>
</comment>
<comment type="similarity">
    <text evidence="10">Belongs to the MICOS complex subunit Mic19 family. Metazoan Mic25 subfamily.</text>
</comment>
<dbReference type="EMBL" id="JF264889">
    <property type="protein sequence ID" value="AEA95848.1"/>
    <property type="molecule type" value="mRNA"/>
</dbReference>
<dbReference type="EMBL" id="AC078867">
    <property type="status" value="NOT_ANNOTATED_CDS"/>
    <property type="molecule type" value="Genomic_DNA"/>
</dbReference>
<dbReference type="EMBL" id="AC092898">
    <property type="status" value="NOT_ANNOTATED_CDS"/>
    <property type="molecule type" value="Genomic_DNA"/>
</dbReference>
<dbReference type="EMBL" id="AC117450">
    <property type="status" value="NOT_ANNOTATED_CDS"/>
    <property type="molecule type" value="Genomic_DNA"/>
</dbReference>
<dbReference type="EMBL" id="CH471052">
    <property type="protein sequence ID" value="EAW79352.1"/>
    <property type="molecule type" value="Genomic_DNA"/>
</dbReference>
<dbReference type="EMBL" id="BC006123">
    <property type="protein sequence ID" value="AAH06123.1"/>
    <property type="molecule type" value="mRNA"/>
</dbReference>
<dbReference type="CCDS" id="CCDS3041.1"/>
<dbReference type="RefSeq" id="NP_001307539.1">
    <property type="nucleotide sequence ID" value="NM_001320610.1"/>
</dbReference>
<dbReference type="RefSeq" id="NP_115719.1">
    <property type="nucleotide sequence ID" value="NM_032343.3"/>
</dbReference>
<dbReference type="SMR" id="Q9BRQ6"/>
<dbReference type="BioGRID" id="124029">
    <property type="interactions" value="110"/>
</dbReference>
<dbReference type="ComplexPortal" id="CPX-6141">
    <property type="entry name" value="MICOS mitochondrial contact site and cristae organizing system complex"/>
</dbReference>
<dbReference type="CORUM" id="Q9BRQ6"/>
<dbReference type="FunCoup" id="Q9BRQ6">
    <property type="interactions" value="750"/>
</dbReference>
<dbReference type="IntAct" id="Q9BRQ6">
    <property type="interactions" value="59"/>
</dbReference>
<dbReference type="MINT" id="Q9BRQ6"/>
<dbReference type="STRING" id="9606.ENSP00000290913"/>
<dbReference type="ChEMBL" id="CHEMBL4105993"/>
<dbReference type="GlyGen" id="Q9BRQ6">
    <property type="glycosylation" value="2 sites, 1 O-linked glycan (1 site)"/>
</dbReference>
<dbReference type="iPTMnet" id="Q9BRQ6"/>
<dbReference type="PhosphoSitePlus" id="Q9BRQ6"/>
<dbReference type="SwissPalm" id="Q9BRQ6"/>
<dbReference type="BioMuta" id="CHCHD6"/>
<dbReference type="DMDM" id="62510505"/>
<dbReference type="jPOST" id="Q9BRQ6"/>
<dbReference type="MassIVE" id="Q9BRQ6"/>
<dbReference type="PaxDb" id="9606-ENSP00000290913"/>
<dbReference type="PeptideAtlas" id="Q9BRQ6"/>
<dbReference type="ProteomicsDB" id="78807"/>
<dbReference type="Pumba" id="Q9BRQ6"/>
<dbReference type="Antibodypedia" id="46643">
    <property type="antibodies" value="205 antibodies from 27 providers"/>
</dbReference>
<dbReference type="DNASU" id="84303"/>
<dbReference type="Ensembl" id="ENST00000290913.8">
    <property type="protein sequence ID" value="ENSP00000290913.3"/>
    <property type="gene ID" value="ENSG00000159685.11"/>
</dbReference>
<dbReference type="GeneID" id="84303"/>
<dbReference type="KEGG" id="hsa:84303"/>
<dbReference type="MANE-Select" id="ENST00000290913.8">
    <property type="protein sequence ID" value="ENSP00000290913.3"/>
    <property type="RefSeq nucleotide sequence ID" value="NM_032343.3"/>
    <property type="RefSeq protein sequence ID" value="NP_115719.1"/>
</dbReference>
<dbReference type="UCSC" id="uc003ejf.3">
    <property type="organism name" value="human"/>
</dbReference>
<dbReference type="AGR" id="HGNC:28184"/>
<dbReference type="CTD" id="84303"/>
<dbReference type="DisGeNET" id="84303"/>
<dbReference type="GeneCards" id="CHCHD6"/>
<dbReference type="HGNC" id="HGNC:28184">
    <property type="gene designation" value="CHCHD6"/>
</dbReference>
<dbReference type="HPA" id="ENSG00000159685">
    <property type="expression patterns" value="Tissue enhanced (brain)"/>
</dbReference>
<dbReference type="MIM" id="615634">
    <property type="type" value="gene"/>
</dbReference>
<dbReference type="neXtProt" id="NX_Q9BRQ6"/>
<dbReference type="OpenTargets" id="ENSG00000159685"/>
<dbReference type="PharmGKB" id="PA134899331"/>
<dbReference type="VEuPathDB" id="HostDB:ENSG00000159685"/>
<dbReference type="eggNOG" id="KOG4083">
    <property type="taxonomic scope" value="Eukaryota"/>
</dbReference>
<dbReference type="GeneTree" id="ENSGT00390000000903"/>
<dbReference type="HOGENOM" id="CLU_049040_0_0_1"/>
<dbReference type="InParanoid" id="Q9BRQ6"/>
<dbReference type="OMA" id="CYRDHAH"/>
<dbReference type="OrthoDB" id="70030at2759"/>
<dbReference type="PAN-GO" id="Q9BRQ6">
    <property type="GO annotations" value="3 GO annotations based on evolutionary models"/>
</dbReference>
<dbReference type="PhylomeDB" id="Q9BRQ6"/>
<dbReference type="TreeFam" id="TF326279"/>
<dbReference type="PathwayCommons" id="Q9BRQ6"/>
<dbReference type="Reactome" id="R-HSA-8949613">
    <property type="pathway name" value="Cristae formation"/>
</dbReference>
<dbReference type="SignaLink" id="Q9BRQ6"/>
<dbReference type="BioGRID-ORCS" id="84303">
    <property type="hits" value="11 hits in 1162 CRISPR screens"/>
</dbReference>
<dbReference type="CD-CODE" id="FB4E32DD">
    <property type="entry name" value="Presynaptic clusters and postsynaptic densities"/>
</dbReference>
<dbReference type="ChiTaRS" id="CHCHD6">
    <property type="organism name" value="human"/>
</dbReference>
<dbReference type="GenomeRNAi" id="84303"/>
<dbReference type="Pharos" id="Q9BRQ6">
    <property type="development level" value="Tbio"/>
</dbReference>
<dbReference type="PRO" id="PR:Q9BRQ6"/>
<dbReference type="Proteomes" id="UP000005640">
    <property type="component" value="Chromosome 3"/>
</dbReference>
<dbReference type="RNAct" id="Q9BRQ6">
    <property type="molecule type" value="protein"/>
</dbReference>
<dbReference type="Bgee" id="ENSG00000159685">
    <property type="expression patterns" value="Expressed in left testis and 141 other cell types or tissues"/>
</dbReference>
<dbReference type="ExpressionAtlas" id="Q9BRQ6">
    <property type="expression patterns" value="baseline and differential"/>
</dbReference>
<dbReference type="GO" id="GO:0005829">
    <property type="term" value="C:cytosol"/>
    <property type="evidence" value="ECO:0000314"/>
    <property type="project" value="HPA"/>
</dbReference>
<dbReference type="GO" id="GO:0140275">
    <property type="term" value="C:MIB complex"/>
    <property type="evidence" value="ECO:0007005"/>
    <property type="project" value="UniProtKB"/>
</dbReference>
<dbReference type="GO" id="GO:0061617">
    <property type="term" value="C:MICOS complex"/>
    <property type="evidence" value="ECO:0000314"/>
    <property type="project" value="UniProtKB"/>
</dbReference>
<dbReference type="GO" id="GO:0044284">
    <property type="term" value="C:mitochondrial crista junction"/>
    <property type="evidence" value="ECO:0000303"/>
    <property type="project" value="ComplexPortal"/>
</dbReference>
<dbReference type="GO" id="GO:0005743">
    <property type="term" value="C:mitochondrial inner membrane"/>
    <property type="evidence" value="ECO:0000314"/>
    <property type="project" value="UniProtKB"/>
</dbReference>
<dbReference type="GO" id="GO:0005739">
    <property type="term" value="C:mitochondrion"/>
    <property type="evidence" value="ECO:0000314"/>
    <property type="project" value="UniProtKB"/>
</dbReference>
<dbReference type="GO" id="GO:0001401">
    <property type="term" value="C:SAM complex"/>
    <property type="evidence" value="ECO:0007005"/>
    <property type="project" value="UniProtKB"/>
</dbReference>
<dbReference type="GO" id="GO:0042407">
    <property type="term" value="P:cristae formation"/>
    <property type="evidence" value="ECO:0000315"/>
    <property type="project" value="UniProtKB"/>
</dbReference>
<dbReference type="GO" id="GO:0006974">
    <property type="term" value="P:DNA damage response"/>
    <property type="evidence" value="ECO:0000314"/>
    <property type="project" value="UniProtKB"/>
</dbReference>
<dbReference type="GO" id="GO:0007007">
    <property type="term" value="P:inner mitochondrial membrane organization"/>
    <property type="evidence" value="ECO:0000305"/>
    <property type="project" value="UniProtKB"/>
</dbReference>
<dbReference type="InterPro" id="IPR007964">
    <property type="entry name" value="MIC19/MIC25"/>
</dbReference>
<dbReference type="InterPro" id="IPR042860">
    <property type="entry name" value="MIC25"/>
</dbReference>
<dbReference type="PANTHER" id="PTHR47609">
    <property type="entry name" value="MICOS COMPLEX SUBUNIT MIC25"/>
    <property type="match status" value="1"/>
</dbReference>
<dbReference type="PANTHER" id="PTHR47609:SF1">
    <property type="entry name" value="MICOS COMPLEX SUBUNIT MIC25"/>
    <property type="match status" value="1"/>
</dbReference>
<dbReference type="Pfam" id="PF05300">
    <property type="entry name" value="MIC19_MIC25"/>
    <property type="match status" value="1"/>
</dbReference>
<dbReference type="PROSITE" id="PS51808">
    <property type="entry name" value="CHCH"/>
    <property type="match status" value="1"/>
</dbReference>
<sequence length="235" mass="26458">MGSTESSEGRRVSFGVDEEERVRVLQGVRLSENVVNRMKEPSSPPPAPTSSTFGLQDGNLRAPHKESTLPRSGSSGGQQPSGMKEGVKRYEQEHAAIQDKLFQVAKREREAATKHSKASLPTGEGSISHEEQKSVRLARELESREAELRRRDTFYKEQLERIERKNAEMYKLSSEQFHEAASKMESTIKPRRVEPVCSGLQAQILHCYRDRPHEVLLCSDLVKAYQRCVSAAHKG</sequence>
<evidence type="ECO:0000250" key="1">
    <source>
        <dbReference type="UniProtKB" id="Q91VN4"/>
    </source>
</evidence>
<evidence type="ECO:0000255" key="2"/>
<evidence type="ECO:0000255" key="3">
    <source>
        <dbReference type="PROSITE-ProRule" id="PRU01150"/>
    </source>
</evidence>
<evidence type="ECO:0000256" key="4">
    <source>
        <dbReference type="SAM" id="MobiDB-lite"/>
    </source>
</evidence>
<evidence type="ECO:0000269" key="5">
    <source>
    </source>
</evidence>
<evidence type="ECO:0000269" key="6">
    <source>
    </source>
</evidence>
<evidence type="ECO:0000269" key="7">
    <source>
    </source>
</evidence>
<evidence type="ECO:0000269" key="8">
    <source>
    </source>
</evidence>
<evidence type="ECO:0000269" key="9">
    <source>
    </source>
</evidence>
<evidence type="ECO:0000305" key="10"/>
<evidence type="ECO:0000305" key="11">
    <source>
    </source>
</evidence>
<evidence type="ECO:0007744" key="12">
    <source>
    </source>
</evidence>
<reference key="1">
    <citation type="journal article" date="2012" name="J. Biol. Chem.">
        <title>CHCM1/CHCHD6, a novel mitochondrial protein linked to regulation of mitofilin and mitochondrial cristae morphology.</title>
        <authorList>
            <person name="An J."/>
            <person name="Shi J."/>
            <person name="He Q."/>
            <person name="Lui K."/>
            <person name="Liu Y."/>
            <person name="Huang Y."/>
            <person name="Sheikh M.S."/>
        </authorList>
    </citation>
    <scope>NUCLEOTIDE SEQUENCE [MRNA]</scope>
    <scope>FUNCTION</scope>
    <scope>SUBCELLULAR LOCATION</scope>
    <scope>INDUCTION</scope>
    <scope>INTERACTION WITH CHCHD3; DISC1 AND IMMT</scope>
</reference>
<reference key="2">
    <citation type="journal article" date="2006" name="Nature">
        <title>The DNA sequence, annotation and analysis of human chromosome 3.</title>
        <authorList>
            <person name="Muzny D.M."/>
            <person name="Scherer S.E."/>
            <person name="Kaul R."/>
            <person name="Wang J."/>
            <person name="Yu J."/>
            <person name="Sudbrak R."/>
            <person name="Buhay C.J."/>
            <person name="Chen R."/>
            <person name="Cree A."/>
            <person name="Ding Y."/>
            <person name="Dugan-Rocha S."/>
            <person name="Gill R."/>
            <person name="Gunaratne P."/>
            <person name="Harris R.A."/>
            <person name="Hawes A.C."/>
            <person name="Hernandez J."/>
            <person name="Hodgson A.V."/>
            <person name="Hume J."/>
            <person name="Jackson A."/>
            <person name="Khan Z.M."/>
            <person name="Kovar-Smith C."/>
            <person name="Lewis L.R."/>
            <person name="Lozado R.J."/>
            <person name="Metzker M.L."/>
            <person name="Milosavljevic A."/>
            <person name="Miner G.R."/>
            <person name="Morgan M.B."/>
            <person name="Nazareth L.V."/>
            <person name="Scott G."/>
            <person name="Sodergren E."/>
            <person name="Song X.-Z."/>
            <person name="Steffen D."/>
            <person name="Wei S."/>
            <person name="Wheeler D.A."/>
            <person name="Wright M.W."/>
            <person name="Worley K.C."/>
            <person name="Yuan Y."/>
            <person name="Zhang Z."/>
            <person name="Adams C.Q."/>
            <person name="Ansari-Lari M.A."/>
            <person name="Ayele M."/>
            <person name="Brown M.J."/>
            <person name="Chen G."/>
            <person name="Chen Z."/>
            <person name="Clendenning J."/>
            <person name="Clerc-Blankenburg K.P."/>
            <person name="Chen R."/>
            <person name="Chen Z."/>
            <person name="Davis C."/>
            <person name="Delgado O."/>
            <person name="Dinh H.H."/>
            <person name="Dong W."/>
            <person name="Draper H."/>
            <person name="Ernst S."/>
            <person name="Fu G."/>
            <person name="Gonzalez-Garay M.L."/>
            <person name="Garcia D.K."/>
            <person name="Gillett W."/>
            <person name="Gu J."/>
            <person name="Hao B."/>
            <person name="Haugen E."/>
            <person name="Havlak P."/>
            <person name="He X."/>
            <person name="Hennig S."/>
            <person name="Hu S."/>
            <person name="Huang W."/>
            <person name="Jackson L.R."/>
            <person name="Jacob L.S."/>
            <person name="Kelly S.H."/>
            <person name="Kube M."/>
            <person name="Levy R."/>
            <person name="Li Z."/>
            <person name="Liu B."/>
            <person name="Liu J."/>
            <person name="Liu W."/>
            <person name="Lu J."/>
            <person name="Maheshwari M."/>
            <person name="Nguyen B.-V."/>
            <person name="Okwuonu G.O."/>
            <person name="Palmeiri A."/>
            <person name="Pasternak S."/>
            <person name="Perez L.M."/>
            <person name="Phelps K.A."/>
            <person name="Plopper F.J."/>
            <person name="Qiang B."/>
            <person name="Raymond C."/>
            <person name="Rodriguez R."/>
            <person name="Saenphimmachak C."/>
            <person name="Santibanez J."/>
            <person name="Shen H."/>
            <person name="Shen Y."/>
            <person name="Subramanian S."/>
            <person name="Tabor P.E."/>
            <person name="Verduzco D."/>
            <person name="Waldron L."/>
            <person name="Wang J."/>
            <person name="Wang J."/>
            <person name="Wang Q."/>
            <person name="Williams G.A."/>
            <person name="Wong G.K.-S."/>
            <person name="Yao Z."/>
            <person name="Zhang J."/>
            <person name="Zhang X."/>
            <person name="Zhao G."/>
            <person name="Zhou J."/>
            <person name="Zhou Y."/>
            <person name="Nelson D."/>
            <person name="Lehrach H."/>
            <person name="Reinhardt R."/>
            <person name="Naylor S.L."/>
            <person name="Yang H."/>
            <person name="Olson M."/>
            <person name="Weinstock G."/>
            <person name="Gibbs R.A."/>
        </authorList>
    </citation>
    <scope>NUCLEOTIDE SEQUENCE [LARGE SCALE GENOMIC DNA]</scope>
</reference>
<reference key="3">
    <citation type="submission" date="2005-09" db="EMBL/GenBank/DDBJ databases">
        <authorList>
            <person name="Mural R.J."/>
            <person name="Istrail S."/>
            <person name="Sutton G."/>
            <person name="Florea L."/>
            <person name="Halpern A.L."/>
            <person name="Mobarry C.M."/>
            <person name="Lippert R."/>
            <person name="Walenz B."/>
            <person name="Shatkay H."/>
            <person name="Dew I."/>
            <person name="Miller J.R."/>
            <person name="Flanigan M.J."/>
            <person name="Edwards N.J."/>
            <person name="Bolanos R."/>
            <person name="Fasulo D."/>
            <person name="Halldorsson B.V."/>
            <person name="Hannenhalli S."/>
            <person name="Turner R."/>
            <person name="Yooseph S."/>
            <person name="Lu F."/>
            <person name="Nusskern D.R."/>
            <person name="Shue B.C."/>
            <person name="Zheng X.H."/>
            <person name="Zhong F."/>
            <person name="Delcher A.L."/>
            <person name="Huson D.H."/>
            <person name="Kravitz S.A."/>
            <person name="Mouchard L."/>
            <person name="Reinert K."/>
            <person name="Remington K.A."/>
            <person name="Clark A.G."/>
            <person name="Waterman M.S."/>
            <person name="Eichler E.E."/>
            <person name="Adams M.D."/>
            <person name="Hunkapiller M.W."/>
            <person name="Myers E.W."/>
            <person name="Venter J.C."/>
        </authorList>
    </citation>
    <scope>NUCLEOTIDE SEQUENCE [LARGE SCALE GENOMIC DNA]</scope>
</reference>
<reference key="4">
    <citation type="journal article" date="2004" name="Genome Res.">
        <title>The status, quality, and expansion of the NIH full-length cDNA project: the Mammalian Gene Collection (MGC).</title>
        <authorList>
            <consortium name="The MGC Project Team"/>
        </authorList>
    </citation>
    <scope>NUCLEOTIDE SEQUENCE [LARGE SCALE MRNA]</scope>
    <source>
        <tissue>Lung</tissue>
    </source>
</reference>
<reference key="5">
    <citation type="journal article" date="2007" name="FEBS Lett.">
        <title>The mitochondrial inner membrane protein mitofilin exists as a complex with SAM50, metaxins 1 and 2, coiled-coil-helix coiled-coil-helix domain-containing protein 3 and 6 and DnaJC11.</title>
        <authorList>
            <person name="Xie J."/>
            <person name="Marusich M.F."/>
            <person name="Souda P."/>
            <person name="Whitelegge J."/>
            <person name="Capaldi R.A."/>
        </authorList>
    </citation>
    <scope>IDENTIFICATION IN A COMPLEX WITH IMMT</scope>
</reference>
<reference key="6">
    <citation type="journal article" date="2008" name="Proc. Natl. Acad. Sci. U.S.A.">
        <title>A quantitative atlas of mitotic phosphorylation.</title>
        <authorList>
            <person name="Dephoure N."/>
            <person name="Zhou C."/>
            <person name="Villen J."/>
            <person name="Beausoleil S.A."/>
            <person name="Bakalarski C.E."/>
            <person name="Elledge S.J."/>
            <person name="Gygi S.P."/>
        </authorList>
    </citation>
    <scope>IDENTIFICATION BY MASS SPECTROMETRY [LARGE SCALE ANALYSIS]</scope>
    <source>
        <tissue>Cervix carcinoma</tissue>
    </source>
</reference>
<reference key="7">
    <citation type="journal article" date="2011" name="BMC Syst. Biol.">
        <title>Initial characterization of the human central proteome.</title>
        <authorList>
            <person name="Burkard T.R."/>
            <person name="Planyavsky M."/>
            <person name="Kaupe I."/>
            <person name="Breitwieser F.P."/>
            <person name="Buerckstuemmer T."/>
            <person name="Bennett K.L."/>
            <person name="Superti-Furga G."/>
            <person name="Colinge J."/>
        </authorList>
    </citation>
    <scope>IDENTIFICATION BY MASS SPECTROMETRY [LARGE SCALE ANALYSIS]</scope>
</reference>
<reference key="8">
    <citation type="journal article" date="2014" name="J. Cell Biol.">
        <title>Uniform nomenclature for the mitochondrial contact site and cristae organizing system.</title>
        <authorList>
            <person name="Pfanner N."/>
            <person name="van der Laan M."/>
            <person name="Amati P."/>
            <person name="Capaldi R.A."/>
            <person name="Caudy A.A."/>
            <person name="Chacinska A."/>
            <person name="Darshi M."/>
            <person name="Deckers M."/>
            <person name="Hoppins S."/>
            <person name="Icho T."/>
            <person name="Jakobs S."/>
            <person name="Ji J."/>
            <person name="Kozjak-Pavlovic V."/>
            <person name="Meisinger C."/>
            <person name="Odgren P.R."/>
            <person name="Park S.K."/>
            <person name="Rehling P."/>
            <person name="Reichert A.S."/>
            <person name="Sheikh M.S."/>
            <person name="Taylor S.S."/>
            <person name="Tsuchida N."/>
            <person name="van der Bliek A.M."/>
            <person name="van der Klei I.J."/>
            <person name="Weissman J.S."/>
            <person name="Westermann B."/>
            <person name="Zha J."/>
            <person name="Neupert W."/>
            <person name="Nunnari J."/>
        </authorList>
    </citation>
    <scope>NOMENCLATURE</scope>
</reference>
<reference key="9">
    <citation type="journal article" date="2014" name="J. Proteomics">
        <title>An enzyme assisted RP-RPLC approach for in-depth analysis of human liver phosphoproteome.</title>
        <authorList>
            <person name="Bian Y."/>
            <person name="Song C."/>
            <person name="Cheng K."/>
            <person name="Dong M."/>
            <person name="Wang F."/>
            <person name="Huang J."/>
            <person name="Sun D."/>
            <person name="Wang L."/>
            <person name="Ye M."/>
            <person name="Zou H."/>
        </authorList>
    </citation>
    <scope>PHOSPHORYLATION [LARGE SCALE ANALYSIS] AT SER-13</scope>
    <scope>IDENTIFICATION BY MASS SPECTROMETRY [LARGE SCALE ANALYSIS]</scope>
    <source>
        <tissue>Liver</tissue>
    </source>
</reference>
<reference key="10">
    <citation type="journal article" date="2015" name="Elife">
        <title>QIL1 is a novel mitochondrial protein required for MICOS complex stability and cristae morphology.</title>
        <authorList>
            <person name="Guarani V."/>
            <person name="McNeill E.M."/>
            <person name="Paulo J.A."/>
            <person name="Huttlin E.L."/>
            <person name="Froehlich F."/>
            <person name="Gygi S.P."/>
            <person name="Van Vactor D."/>
            <person name="Harper J.W."/>
        </authorList>
    </citation>
    <scope>IDENTIFICATION IN THE MICOS COMPLEX</scope>
    <scope>INTERACTION WITH IMMT</scope>
    <scope>SUBCELLULAR LOCATION</scope>
</reference>
<reference key="11">
    <citation type="journal article" date="2015" name="PLoS ONE">
        <title>Detailed analysis of the human mitochondrial contact site complex indicate a hierarchy of subunits.</title>
        <authorList>
            <person name="Ott C."/>
            <person name="Dorsch E."/>
            <person name="Fraunholz M."/>
            <person name="Straub S."/>
            <person name="Kozjak-Pavlovic V."/>
        </authorList>
    </citation>
    <scope>IDENTIFICATION IN THE MICOS COMPLEX</scope>
    <scope>SUBCELLULAR LOCATION</scope>
</reference>
<reference key="12">
    <citation type="journal article" date="2020" name="Cell Rep.">
        <title>Mitochondria and Peroxisome Remodeling across Cytomegalovirus Infection Time Viewed through the Lens of Inter-ViSTA.</title>
        <authorList>
            <person name="Federspiel J.D."/>
            <person name="Cook K.C."/>
            <person name="Kennedy M.A."/>
            <person name="Venkatesh S.S."/>
            <person name="Otter C.J."/>
            <person name="Hofstadter W.A."/>
            <person name="Jean Beltran P.M."/>
            <person name="Cristea I.M."/>
        </authorList>
    </citation>
    <scope>INTERACTION WITH HUMAN CYTOMEGALOVIRUS PROTEIN UL37 (MICROBIAL INFECTION)</scope>
</reference>
<reference key="13">
    <citation type="journal article" date="2015" name="Proteomics">
        <title>N-terminome analysis of the human mitochondrial proteome.</title>
        <authorList>
            <person name="Vaca Jacome A.S."/>
            <person name="Rabilloud T."/>
            <person name="Schaeffer-Reiss C."/>
            <person name="Rompais M."/>
            <person name="Ayoub D."/>
            <person name="Lane L."/>
            <person name="Bairoch A."/>
            <person name="Van Dorsselaer A."/>
            <person name="Carapito C."/>
        </authorList>
    </citation>
    <scope>IDENTIFICATION BY MASS SPECTROMETRY [LARGE SCALE ANALYSIS]</scope>
</reference>